<keyword id="KW-0002">3D-structure</keyword>
<keyword id="KW-0446">Lipid-binding</keyword>
<keyword id="KW-0732">Signal</keyword>
<keyword id="KW-0813">Transport</keyword>
<name>FABH_ASCSU</name>
<reference key="1">
    <citation type="journal article" date="1997" name="J. Biol. Chem.">
        <title>Secretion of a novel, developmentally regulated fatty acid-binding protein into the perivitelline fluid of the parasitic nematode, Ascaris suum.</title>
        <authorList>
            <person name="Mei B."/>
            <person name="Kennedy M.W."/>
            <person name="Beauchamp J."/>
            <person name="Komuniecki P.R."/>
            <person name="Komuniecki R."/>
        </authorList>
    </citation>
    <scope>NUCLEOTIDE SEQUENCE [MRNA]</scope>
    <scope>3D-STRUCTURE MODELING</scope>
</reference>
<protein>
    <recommendedName>
        <fullName>Fatty acid-binding protein homolog</fullName>
    </recommendedName>
    <alternativeName>
        <fullName>AS-P18</fullName>
    </alternativeName>
</protein>
<comment type="function">
    <text>May play a role in sequestering potentially toxic fatty acids and their peroxidation products, or it may be involved in the maintenance of the impermeable lipid layer of the eggshell.</text>
</comment>
<comment type="tissue specificity">
    <text>Abundant in the fluid surrounding the developing embryo of Ascaris suum.</text>
</comment>
<comment type="developmental stage">
    <text>Synthesis appears to be switched off shortly after hatching from the egg and invasion of the host. P18 is not found in unembryonated eggs, begins to be synthesized at about day 3 of development, reaches a maximal concentration with the formation of the first-stage larva and remains abundant in the perivitelline fluid of the second-stage larva.</text>
</comment>
<comment type="domain">
    <text evidence="1">Forms a beta-barrel structure that accommodates hydrophobic ligands in its interior.</text>
</comment>
<comment type="similarity">
    <text evidence="2">Belongs to the calycin superfamily. Fatty-acid binding protein (FABP) family.</text>
</comment>
<evidence type="ECO:0000250" key="1"/>
<evidence type="ECO:0000305" key="2"/>
<evidence type="ECO:0007829" key="3">
    <source>
        <dbReference type="PDB" id="6I8X"/>
    </source>
</evidence>
<feature type="signal peptide">
    <location>
        <begin position="1"/>
        <end position="23"/>
    </location>
</feature>
<feature type="chain" id="PRO_0000008736" description="Fatty acid-binding protein homolog">
    <location>
        <begin position="24"/>
        <end position="163"/>
    </location>
</feature>
<feature type="helix" evidence="3">
    <location>
        <begin position="25"/>
        <end position="27"/>
    </location>
</feature>
<feature type="strand" evidence="3">
    <location>
        <begin position="29"/>
        <end position="38"/>
    </location>
</feature>
<feature type="helix" evidence="3">
    <location>
        <begin position="39"/>
        <end position="45"/>
    </location>
</feature>
<feature type="helix" evidence="3">
    <location>
        <begin position="50"/>
        <end position="57"/>
    </location>
</feature>
<feature type="strand" evidence="3">
    <location>
        <begin position="61"/>
        <end position="67"/>
    </location>
</feature>
<feature type="strand" evidence="3">
    <location>
        <begin position="76"/>
        <end position="84"/>
    </location>
</feature>
<feature type="strand" evidence="3">
    <location>
        <begin position="86"/>
        <end position="92"/>
    </location>
</feature>
<feature type="strand" evidence="3">
    <location>
        <begin position="98"/>
        <end position="101"/>
    </location>
</feature>
<feature type="strand" evidence="3">
    <location>
        <begin position="105"/>
        <end position="116"/>
    </location>
</feature>
<feature type="strand" evidence="3">
    <location>
        <begin position="119"/>
        <end position="128"/>
    </location>
</feature>
<feature type="strand" evidence="3">
    <location>
        <begin position="133"/>
        <end position="141"/>
    </location>
</feature>
<feature type="strand" evidence="3">
    <location>
        <begin position="144"/>
        <end position="151"/>
    </location>
</feature>
<feature type="strand" evidence="3">
    <location>
        <begin position="154"/>
        <end position="162"/>
    </location>
</feature>
<organism>
    <name type="scientific">Ascaris suum</name>
    <name type="common">Pig roundworm</name>
    <name type="synonym">Ascaris lumbricoides</name>
    <dbReference type="NCBI Taxonomy" id="6253"/>
    <lineage>
        <taxon>Eukaryota</taxon>
        <taxon>Metazoa</taxon>
        <taxon>Ecdysozoa</taxon>
        <taxon>Nematoda</taxon>
        <taxon>Chromadorea</taxon>
        <taxon>Rhabditida</taxon>
        <taxon>Spirurina</taxon>
        <taxon>Ascaridomorpha</taxon>
        <taxon>Ascaridoidea</taxon>
        <taxon>Ascarididae</taxon>
        <taxon>Ascaris</taxon>
    </lineage>
</organism>
<sequence>MRCLVALILTVLIVTPEVEAKTLPDKFLGTFKLERDENFDEYLKARGYGWIMRQVIKLAGVTKKFRNAASGKPDRYDMENLTTKKDTHHKDWALGEEFQDEALDSTQHKITFDLKDPNTLTETHIKVDDPTDVETYEYRRDGDYLVMKMSWKGVSTSRYYKKQ</sequence>
<proteinExistence type="evidence at protein level"/>
<accession>P55776</accession>
<dbReference type="EMBL" id="U51906">
    <property type="protein sequence ID" value="AAA98565.1"/>
    <property type="molecule type" value="mRNA"/>
</dbReference>
<dbReference type="PDB" id="6I8X">
    <property type="method" value="X-ray"/>
    <property type="resolution" value="2.30 A"/>
    <property type="chains" value="A/B=21-163"/>
</dbReference>
<dbReference type="PDB" id="6I9F">
    <property type="method" value="NMR"/>
    <property type="chains" value="A=21-163"/>
</dbReference>
<dbReference type="PDBsum" id="6I8X"/>
<dbReference type="PDBsum" id="6I9F"/>
<dbReference type="BMRB" id="P55776"/>
<dbReference type="SMR" id="P55776"/>
<dbReference type="GO" id="GO:0008289">
    <property type="term" value="F:lipid binding"/>
    <property type="evidence" value="ECO:0007669"/>
    <property type="project" value="UniProtKB-KW"/>
</dbReference>
<dbReference type="CDD" id="cd00742">
    <property type="entry name" value="FABP"/>
    <property type="match status" value="1"/>
</dbReference>
<dbReference type="Gene3D" id="2.40.128.20">
    <property type="match status" value="1"/>
</dbReference>
<dbReference type="InterPro" id="IPR012674">
    <property type="entry name" value="Calycin"/>
</dbReference>
<dbReference type="InterPro" id="IPR000463">
    <property type="entry name" value="Fatty_acid-bd"/>
</dbReference>
<dbReference type="InterPro" id="IPR040094">
    <property type="entry name" value="Lbp1-4"/>
</dbReference>
<dbReference type="PANTHER" id="PTHR22725:SF2">
    <property type="entry name" value="FATTY ACID-BINDING PROTEIN HOMOLOG 1-RELATED"/>
    <property type="match status" value="1"/>
</dbReference>
<dbReference type="PANTHER" id="PTHR22725">
    <property type="entry name" value="FATTY ACID-BINDING PROTEIN HOMOLOG 1-RELATED-RELATED"/>
    <property type="match status" value="1"/>
</dbReference>
<dbReference type="PRINTS" id="PR00178">
    <property type="entry name" value="FATTYACIDBP"/>
</dbReference>
<dbReference type="SUPFAM" id="SSF50814">
    <property type="entry name" value="Lipocalins"/>
    <property type="match status" value="1"/>
</dbReference>
<dbReference type="PROSITE" id="PS00214">
    <property type="entry name" value="FABP"/>
    <property type="match status" value="1"/>
</dbReference>